<reference key="1">
    <citation type="submission" date="2006-12" db="EMBL/GenBank/DDBJ databases">
        <title>Complete sequence of chromosome 1 of Acidovorax sp. JS42.</title>
        <authorList>
            <person name="Copeland A."/>
            <person name="Lucas S."/>
            <person name="Lapidus A."/>
            <person name="Barry K."/>
            <person name="Detter J.C."/>
            <person name="Glavina del Rio T."/>
            <person name="Dalin E."/>
            <person name="Tice H."/>
            <person name="Pitluck S."/>
            <person name="Chertkov O."/>
            <person name="Brettin T."/>
            <person name="Bruce D."/>
            <person name="Han C."/>
            <person name="Tapia R."/>
            <person name="Gilna P."/>
            <person name="Schmutz J."/>
            <person name="Larimer F."/>
            <person name="Land M."/>
            <person name="Hauser L."/>
            <person name="Kyrpides N."/>
            <person name="Kim E."/>
            <person name="Stahl D."/>
            <person name="Richardson P."/>
        </authorList>
    </citation>
    <scope>NUCLEOTIDE SEQUENCE [LARGE SCALE GENOMIC DNA]</scope>
    <source>
        <strain>JS42</strain>
    </source>
</reference>
<evidence type="ECO:0000255" key="1">
    <source>
        <dbReference type="HAMAP-Rule" id="MF_00531"/>
    </source>
</evidence>
<evidence type="ECO:0000305" key="2"/>
<dbReference type="EMBL" id="CP000539">
    <property type="protein sequence ID" value="ABM40536.1"/>
    <property type="molecule type" value="Genomic_DNA"/>
</dbReference>
<dbReference type="SMR" id="A1W2R1"/>
<dbReference type="STRING" id="232721.Ajs_0282"/>
<dbReference type="KEGG" id="ajs:Ajs_0282"/>
<dbReference type="eggNOG" id="COG0185">
    <property type="taxonomic scope" value="Bacteria"/>
</dbReference>
<dbReference type="HOGENOM" id="CLU_144911_0_1_4"/>
<dbReference type="Proteomes" id="UP000000645">
    <property type="component" value="Chromosome"/>
</dbReference>
<dbReference type="GO" id="GO:0005737">
    <property type="term" value="C:cytoplasm"/>
    <property type="evidence" value="ECO:0007669"/>
    <property type="project" value="UniProtKB-ARBA"/>
</dbReference>
<dbReference type="GO" id="GO:0015935">
    <property type="term" value="C:small ribosomal subunit"/>
    <property type="evidence" value="ECO:0007669"/>
    <property type="project" value="InterPro"/>
</dbReference>
<dbReference type="GO" id="GO:0019843">
    <property type="term" value="F:rRNA binding"/>
    <property type="evidence" value="ECO:0007669"/>
    <property type="project" value="UniProtKB-UniRule"/>
</dbReference>
<dbReference type="GO" id="GO:0003735">
    <property type="term" value="F:structural constituent of ribosome"/>
    <property type="evidence" value="ECO:0007669"/>
    <property type="project" value="InterPro"/>
</dbReference>
<dbReference type="GO" id="GO:0000028">
    <property type="term" value="P:ribosomal small subunit assembly"/>
    <property type="evidence" value="ECO:0007669"/>
    <property type="project" value="TreeGrafter"/>
</dbReference>
<dbReference type="GO" id="GO:0006412">
    <property type="term" value="P:translation"/>
    <property type="evidence" value="ECO:0007669"/>
    <property type="project" value="UniProtKB-UniRule"/>
</dbReference>
<dbReference type="FunFam" id="3.30.860.10:FF:000001">
    <property type="entry name" value="30S ribosomal protein S19"/>
    <property type="match status" value="1"/>
</dbReference>
<dbReference type="Gene3D" id="3.30.860.10">
    <property type="entry name" value="30s Ribosomal Protein S19, Chain A"/>
    <property type="match status" value="1"/>
</dbReference>
<dbReference type="HAMAP" id="MF_00531">
    <property type="entry name" value="Ribosomal_uS19"/>
    <property type="match status" value="1"/>
</dbReference>
<dbReference type="InterPro" id="IPR002222">
    <property type="entry name" value="Ribosomal_uS19"/>
</dbReference>
<dbReference type="InterPro" id="IPR005732">
    <property type="entry name" value="Ribosomal_uS19_bac-type"/>
</dbReference>
<dbReference type="InterPro" id="IPR020934">
    <property type="entry name" value="Ribosomal_uS19_CS"/>
</dbReference>
<dbReference type="InterPro" id="IPR023575">
    <property type="entry name" value="Ribosomal_uS19_SF"/>
</dbReference>
<dbReference type="NCBIfam" id="TIGR01050">
    <property type="entry name" value="rpsS_bact"/>
    <property type="match status" value="1"/>
</dbReference>
<dbReference type="PANTHER" id="PTHR11880">
    <property type="entry name" value="RIBOSOMAL PROTEIN S19P FAMILY MEMBER"/>
    <property type="match status" value="1"/>
</dbReference>
<dbReference type="PANTHER" id="PTHR11880:SF8">
    <property type="entry name" value="SMALL RIBOSOMAL SUBUNIT PROTEIN US19M"/>
    <property type="match status" value="1"/>
</dbReference>
<dbReference type="Pfam" id="PF00203">
    <property type="entry name" value="Ribosomal_S19"/>
    <property type="match status" value="1"/>
</dbReference>
<dbReference type="PIRSF" id="PIRSF002144">
    <property type="entry name" value="Ribosomal_S19"/>
    <property type="match status" value="1"/>
</dbReference>
<dbReference type="PRINTS" id="PR00975">
    <property type="entry name" value="RIBOSOMALS19"/>
</dbReference>
<dbReference type="SUPFAM" id="SSF54570">
    <property type="entry name" value="Ribosomal protein S19"/>
    <property type="match status" value="1"/>
</dbReference>
<dbReference type="PROSITE" id="PS00323">
    <property type="entry name" value="RIBOSOMAL_S19"/>
    <property type="match status" value="1"/>
</dbReference>
<protein>
    <recommendedName>
        <fullName evidence="1">Small ribosomal subunit protein uS19</fullName>
    </recommendedName>
    <alternativeName>
        <fullName evidence="2">30S ribosomal protein S19</fullName>
    </alternativeName>
</protein>
<proteinExistence type="inferred from homology"/>
<sequence length="92" mass="10398">MTRSLKKGPFVDHHLVAKVEKAIATKDKKPVKTWSRRSMVLPEFIGLTIAVHNGKQHVPVYVTDQMVGHKLGEFALTRTFKGHPADKKVQKK</sequence>
<name>RS19_ACISJ</name>
<accession>A1W2R1</accession>
<organism>
    <name type="scientific">Acidovorax sp. (strain JS42)</name>
    <dbReference type="NCBI Taxonomy" id="232721"/>
    <lineage>
        <taxon>Bacteria</taxon>
        <taxon>Pseudomonadati</taxon>
        <taxon>Pseudomonadota</taxon>
        <taxon>Betaproteobacteria</taxon>
        <taxon>Burkholderiales</taxon>
        <taxon>Comamonadaceae</taxon>
        <taxon>Acidovorax</taxon>
    </lineage>
</organism>
<keyword id="KW-0687">Ribonucleoprotein</keyword>
<keyword id="KW-0689">Ribosomal protein</keyword>
<keyword id="KW-0694">RNA-binding</keyword>
<keyword id="KW-0699">rRNA-binding</keyword>
<feature type="chain" id="PRO_1000051005" description="Small ribosomal subunit protein uS19">
    <location>
        <begin position="1"/>
        <end position="92"/>
    </location>
</feature>
<comment type="function">
    <text evidence="1">Protein S19 forms a complex with S13 that binds strongly to the 16S ribosomal RNA.</text>
</comment>
<comment type="similarity">
    <text evidence="1">Belongs to the universal ribosomal protein uS19 family.</text>
</comment>
<gene>
    <name evidence="1" type="primary">rpsS</name>
    <name type="ordered locus">Ajs_0282</name>
</gene>